<evidence type="ECO:0000255" key="1">
    <source>
        <dbReference type="HAMAP-Rule" id="MF_01043"/>
    </source>
</evidence>
<proteinExistence type="inferred from homology"/>
<keyword id="KW-0997">Cell inner membrane</keyword>
<keyword id="KW-1003">Cell membrane</keyword>
<keyword id="KW-0444">Lipid biosynthesis</keyword>
<keyword id="KW-0443">Lipid metabolism</keyword>
<keyword id="KW-0472">Membrane</keyword>
<keyword id="KW-0594">Phospholipid biosynthesis</keyword>
<keyword id="KW-1208">Phospholipid metabolism</keyword>
<keyword id="KW-0808">Transferase</keyword>
<keyword id="KW-0812">Transmembrane</keyword>
<keyword id="KW-1133">Transmembrane helix</keyword>
<comment type="function">
    <text evidence="1">Catalyzes the transfer of an acyl group from acyl-phosphate (acyl-PO(4)) to glycerol-3-phosphate (G3P) to form lysophosphatidic acid (LPA). This enzyme utilizes acyl-phosphate as fatty acyl donor, but not acyl-CoA or acyl-ACP.</text>
</comment>
<comment type="catalytic activity">
    <reaction evidence="1">
        <text>an acyl phosphate + sn-glycerol 3-phosphate = a 1-acyl-sn-glycero-3-phosphate + phosphate</text>
        <dbReference type="Rhea" id="RHEA:34075"/>
        <dbReference type="ChEBI" id="CHEBI:43474"/>
        <dbReference type="ChEBI" id="CHEBI:57597"/>
        <dbReference type="ChEBI" id="CHEBI:57970"/>
        <dbReference type="ChEBI" id="CHEBI:59918"/>
        <dbReference type="EC" id="2.3.1.275"/>
    </reaction>
</comment>
<comment type="pathway">
    <text evidence="1">Lipid metabolism; phospholipid metabolism.</text>
</comment>
<comment type="subunit">
    <text evidence="1">Probably interacts with PlsX.</text>
</comment>
<comment type="subcellular location">
    <subcellularLocation>
        <location evidence="1">Cell inner membrane</location>
        <topology evidence="1">Multi-pass membrane protein</topology>
    </subcellularLocation>
</comment>
<comment type="similarity">
    <text evidence="1">Belongs to the PlsY family.</text>
</comment>
<organism>
    <name type="scientific">Vibrio cholerae serotype O1 (strain M66-2)</name>
    <dbReference type="NCBI Taxonomy" id="579112"/>
    <lineage>
        <taxon>Bacteria</taxon>
        <taxon>Pseudomonadati</taxon>
        <taxon>Pseudomonadota</taxon>
        <taxon>Gammaproteobacteria</taxon>
        <taxon>Vibrionales</taxon>
        <taxon>Vibrionaceae</taxon>
        <taxon>Vibrio</taxon>
    </lineage>
</organism>
<protein>
    <recommendedName>
        <fullName evidence="1">Glycerol-3-phosphate acyltransferase</fullName>
    </recommendedName>
    <alternativeName>
        <fullName evidence="1">Acyl-PO4 G3P acyltransferase</fullName>
    </alternativeName>
    <alternativeName>
        <fullName evidence="1">Acyl-phosphate--glycerol-3-phosphate acyltransferase</fullName>
    </alternativeName>
    <alternativeName>
        <fullName evidence="1">G3P acyltransferase</fullName>
        <shortName evidence="1">GPAT</shortName>
        <ecNumber evidence="1">2.3.1.275</ecNumber>
    </alternativeName>
    <alternativeName>
        <fullName evidence="1">Lysophosphatidic acid synthase</fullName>
        <shortName evidence="1">LPA synthase</shortName>
    </alternativeName>
</protein>
<gene>
    <name evidence="1" type="primary">plsY</name>
    <name type="ordered locus">VCM66_0481</name>
</gene>
<reference key="1">
    <citation type="journal article" date="2008" name="PLoS ONE">
        <title>A recalibrated molecular clock and independent origins for the cholera pandemic clones.</title>
        <authorList>
            <person name="Feng L."/>
            <person name="Reeves P.R."/>
            <person name="Lan R."/>
            <person name="Ren Y."/>
            <person name="Gao C."/>
            <person name="Zhou Z."/>
            <person name="Ren Y."/>
            <person name="Cheng J."/>
            <person name="Wang W."/>
            <person name="Wang J."/>
            <person name="Qian W."/>
            <person name="Li D."/>
            <person name="Wang L."/>
        </authorList>
    </citation>
    <scope>NUCLEOTIDE SEQUENCE [LARGE SCALE GENOMIC DNA]</scope>
    <source>
        <strain>M66-2</strain>
    </source>
</reference>
<name>PLSY_VIBCM</name>
<dbReference type="EC" id="2.3.1.275" evidence="1"/>
<dbReference type="EMBL" id="CP001233">
    <property type="protein sequence ID" value="ACP04806.1"/>
    <property type="molecule type" value="Genomic_DNA"/>
</dbReference>
<dbReference type="RefSeq" id="WP_000188027.1">
    <property type="nucleotide sequence ID" value="NC_012578.1"/>
</dbReference>
<dbReference type="SMR" id="C3LS13"/>
<dbReference type="KEGG" id="vcm:VCM66_0481"/>
<dbReference type="HOGENOM" id="CLU_081254_0_2_6"/>
<dbReference type="UniPathway" id="UPA00085"/>
<dbReference type="Proteomes" id="UP000001217">
    <property type="component" value="Chromosome I"/>
</dbReference>
<dbReference type="GO" id="GO:0005886">
    <property type="term" value="C:plasma membrane"/>
    <property type="evidence" value="ECO:0007669"/>
    <property type="project" value="UniProtKB-SubCell"/>
</dbReference>
<dbReference type="GO" id="GO:0043772">
    <property type="term" value="F:acyl-phosphate glycerol-3-phosphate acyltransferase activity"/>
    <property type="evidence" value="ECO:0007669"/>
    <property type="project" value="UniProtKB-UniRule"/>
</dbReference>
<dbReference type="GO" id="GO:0008654">
    <property type="term" value="P:phospholipid biosynthetic process"/>
    <property type="evidence" value="ECO:0007669"/>
    <property type="project" value="UniProtKB-UniRule"/>
</dbReference>
<dbReference type="HAMAP" id="MF_01043">
    <property type="entry name" value="PlsY"/>
    <property type="match status" value="1"/>
</dbReference>
<dbReference type="InterPro" id="IPR003811">
    <property type="entry name" value="G3P_acylTferase_PlsY"/>
</dbReference>
<dbReference type="NCBIfam" id="TIGR00023">
    <property type="entry name" value="glycerol-3-phosphate 1-O-acyltransferase PlsY"/>
    <property type="match status" value="1"/>
</dbReference>
<dbReference type="PANTHER" id="PTHR30309:SF0">
    <property type="entry name" value="GLYCEROL-3-PHOSPHATE ACYLTRANSFERASE-RELATED"/>
    <property type="match status" value="1"/>
</dbReference>
<dbReference type="PANTHER" id="PTHR30309">
    <property type="entry name" value="INNER MEMBRANE PROTEIN YGIH"/>
    <property type="match status" value="1"/>
</dbReference>
<dbReference type="Pfam" id="PF02660">
    <property type="entry name" value="G3P_acyltransf"/>
    <property type="match status" value="1"/>
</dbReference>
<dbReference type="SMART" id="SM01207">
    <property type="entry name" value="G3P_acyltransf"/>
    <property type="match status" value="1"/>
</dbReference>
<accession>C3LS13</accession>
<feature type="chain" id="PRO_1000149591" description="Glycerol-3-phosphate acyltransferase">
    <location>
        <begin position="1"/>
        <end position="208"/>
    </location>
</feature>
<feature type="transmembrane region" description="Helical" evidence="1">
    <location>
        <begin position="4"/>
        <end position="24"/>
    </location>
</feature>
<feature type="transmembrane region" description="Helical" evidence="1">
    <location>
        <begin position="56"/>
        <end position="76"/>
    </location>
</feature>
<feature type="transmembrane region" description="Helical" evidence="1">
    <location>
        <begin position="80"/>
        <end position="100"/>
    </location>
</feature>
<feature type="transmembrane region" description="Helical" evidence="1">
    <location>
        <begin position="117"/>
        <end position="137"/>
    </location>
</feature>
<feature type="transmembrane region" description="Helical" evidence="1">
    <location>
        <begin position="139"/>
        <end position="159"/>
    </location>
</feature>
<sequence>MTPLALSMIIFAYLLGSISSAVLICRVLRLPDPRNVGSQNPGATNVLRIGGKKAAVAVLLCDMLKGTIPVWGGYFLNIEPFMLGLVAIAACLGHMYPIFFHFKGGKGVATALGAIAPIGLDLTAMVMATWLVVVVLFRYSSLAALVTVLLAPLYTWLIKPQYTLPVAMLCCLIVLRHHQNVKRLFAGTEPKVGEKNKKPSDDEESRVV</sequence>